<feature type="chain" id="PRO_0000136748" description="Large ribosomal subunit protein eL8">
    <location>
        <begin position="1"/>
        <end position="266"/>
    </location>
</feature>
<feature type="modified residue" description="N6-acetyllysine" evidence="1">
    <location>
        <position position="34"/>
    </location>
</feature>
<feature type="modified residue" description="N6-acetyllysine; alternate" evidence="1">
    <location>
        <position position="97"/>
    </location>
</feature>
<feature type="modified residue" description="N6-acetyllysine" evidence="1">
    <location>
        <position position="217"/>
    </location>
</feature>
<feature type="cross-link" description="Glycyl lysine isopeptide (Lys-Gly) (interchain with G-Cter in SUMO2)" evidence="1">
    <location>
        <position position="11"/>
    </location>
</feature>
<feature type="cross-link" description="Glycyl lysine isopeptide (Lys-Gly) (interchain with G-Cter in SUMO2)" evidence="1">
    <location>
        <position position="20"/>
    </location>
</feature>
<feature type="cross-link" description="Glycyl lysine isopeptide (Lys-Gly) (interchain with G-Cter in SUMO2)" evidence="1">
    <location>
        <position position="21"/>
    </location>
</feature>
<feature type="cross-link" description="Glycyl lysine isopeptide (Lys-Gly) (interchain with G-Cter in SUMO2)" evidence="1">
    <location>
        <position position="48"/>
    </location>
</feature>
<feature type="cross-link" description="Glycyl lysine isopeptide (Lys-Gly) (interchain with G-Cter in SUMO2); alternate" evidence="1">
    <location>
        <position position="97"/>
    </location>
</feature>
<feature type="cross-link" description="Glycyl lysine isopeptide (Lys-Gly) (interchain with G-Cter in SUMO2)" evidence="1">
    <location>
        <position position="125"/>
    </location>
</feature>
<feature type="cross-link" description="Glycyl lysine isopeptide (Lys-Gly) (interchain with G-Cter in SUMO2)" evidence="1">
    <location>
        <position position="245"/>
    </location>
</feature>
<accession>P12970</accession>
<accession>Q91YM3</accession>
<reference key="1">
    <citation type="journal article" date="1988" name="Mol. Cell. Biol.">
        <title>One of the tightly clustered genes of the mouse surfeit locus is a highly expressed member of a multigene family whose other members are predominantly processed pseudogenes.</title>
        <authorList>
            <person name="Huxley C."/>
            <person name="Williams T."/>
            <person name="Fried M."/>
        </authorList>
    </citation>
    <scope>NUCLEOTIDE SEQUENCE [GENOMIC DNA]</scope>
</reference>
<reference key="2">
    <citation type="journal article" date="2005" name="Science">
        <title>The transcriptional landscape of the mammalian genome.</title>
        <authorList>
            <person name="Carninci P."/>
            <person name="Kasukawa T."/>
            <person name="Katayama S."/>
            <person name="Gough J."/>
            <person name="Frith M.C."/>
            <person name="Maeda N."/>
            <person name="Oyama R."/>
            <person name="Ravasi T."/>
            <person name="Lenhard B."/>
            <person name="Wells C."/>
            <person name="Kodzius R."/>
            <person name="Shimokawa K."/>
            <person name="Bajic V.B."/>
            <person name="Brenner S.E."/>
            <person name="Batalov S."/>
            <person name="Forrest A.R."/>
            <person name="Zavolan M."/>
            <person name="Davis M.J."/>
            <person name="Wilming L.G."/>
            <person name="Aidinis V."/>
            <person name="Allen J.E."/>
            <person name="Ambesi-Impiombato A."/>
            <person name="Apweiler R."/>
            <person name="Aturaliya R.N."/>
            <person name="Bailey T.L."/>
            <person name="Bansal M."/>
            <person name="Baxter L."/>
            <person name="Beisel K.W."/>
            <person name="Bersano T."/>
            <person name="Bono H."/>
            <person name="Chalk A.M."/>
            <person name="Chiu K.P."/>
            <person name="Choudhary V."/>
            <person name="Christoffels A."/>
            <person name="Clutterbuck D.R."/>
            <person name="Crowe M.L."/>
            <person name="Dalla E."/>
            <person name="Dalrymple B.P."/>
            <person name="de Bono B."/>
            <person name="Della Gatta G."/>
            <person name="di Bernardo D."/>
            <person name="Down T."/>
            <person name="Engstrom P."/>
            <person name="Fagiolini M."/>
            <person name="Faulkner G."/>
            <person name="Fletcher C.F."/>
            <person name="Fukushima T."/>
            <person name="Furuno M."/>
            <person name="Futaki S."/>
            <person name="Gariboldi M."/>
            <person name="Georgii-Hemming P."/>
            <person name="Gingeras T.R."/>
            <person name="Gojobori T."/>
            <person name="Green R.E."/>
            <person name="Gustincich S."/>
            <person name="Harbers M."/>
            <person name="Hayashi Y."/>
            <person name="Hensch T.K."/>
            <person name="Hirokawa N."/>
            <person name="Hill D."/>
            <person name="Huminiecki L."/>
            <person name="Iacono M."/>
            <person name="Ikeo K."/>
            <person name="Iwama A."/>
            <person name="Ishikawa T."/>
            <person name="Jakt M."/>
            <person name="Kanapin A."/>
            <person name="Katoh M."/>
            <person name="Kawasawa Y."/>
            <person name="Kelso J."/>
            <person name="Kitamura H."/>
            <person name="Kitano H."/>
            <person name="Kollias G."/>
            <person name="Krishnan S.P."/>
            <person name="Kruger A."/>
            <person name="Kummerfeld S.K."/>
            <person name="Kurochkin I.V."/>
            <person name="Lareau L.F."/>
            <person name="Lazarevic D."/>
            <person name="Lipovich L."/>
            <person name="Liu J."/>
            <person name="Liuni S."/>
            <person name="McWilliam S."/>
            <person name="Madan Babu M."/>
            <person name="Madera M."/>
            <person name="Marchionni L."/>
            <person name="Matsuda H."/>
            <person name="Matsuzawa S."/>
            <person name="Miki H."/>
            <person name="Mignone F."/>
            <person name="Miyake S."/>
            <person name="Morris K."/>
            <person name="Mottagui-Tabar S."/>
            <person name="Mulder N."/>
            <person name="Nakano N."/>
            <person name="Nakauchi H."/>
            <person name="Ng P."/>
            <person name="Nilsson R."/>
            <person name="Nishiguchi S."/>
            <person name="Nishikawa S."/>
            <person name="Nori F."/>
            <person name="Ohara O."/>
            <person name="Okazaki Y."/>
            <person name="Orlando V."/>
            <person name="Pang K.C."/>
            <person name="Pavan W.J."/>
            <person name="Pavesi G."/>
            <person name="Pesole G."/>
            <person name="Petrovsky N."/>
            <person name="Piazza S."/>
            <person name="Reed J."/>
            <person name="Reid J.F."/>
            <person name="Ring B.Z."/>
            <person name="Ringwald M."/>
            <person name="Rost B."/>
            <person name="Ruan Y."/>
            <person name="Salzberg S.L."/>
            <person name="Sandelin A."/>
            <person name="Schneider C."/>
            <person name="Schoenbach C."/>
            <person name="Sekiguchi K."/>
            <person name="Semple C.A."/>
            <person name="Seno S."/>
            <person name="Sessa L."/>
            <person name="Sheng Y."/>
            <person name="Shibata Y."/>
            <person name="Shimada H."/>
            <person name="Shimada K."/>
            <person name="Silva D."/>
            <person name="Sinclair B."/>
            <person name="Sperling S."/>
            <person name="Stupka E."/>
            <person name="Sugiura K."/>
            <person name="Sultana R."/>
            <person name="Takenaka Y."/>
            <person name="Taki K."/>
            <person name="Tammoja K."/>
            <person name="Tan S.L."/>
            <person name="Tang S."/>
            <person name="Taylor M.S."/>
            <person name="Tegner J."/>
            <person name="Teichmann S.A."/>
            <person name="Ueda H.R."/>
            <person name="van Nimwegen E."/>
            <person name="Verardo R."/>
            <person name="Wei C.L."/>
            <person name="Yagi K."/>
            <person name="Yamanishi H."/>
            <person name="Zabarovsky E."/>
            <person name="Zhu S."/>
            <person name="Zimmer A."/>
            <person name="Hide W."/>
            <person name="Bult C."/>
            <person name="Grimmond S.M."/>
            <person name="Teasdale R.D."/>
            <person name="Liu E.T."/>
            <person name="Brusic V."/>
            <person name="Quackenbush J."/>
            <person name="Wahlestedt C."/>
            <person name="Mattick J.S."/>
            <person name="Hume D.A."/>
            <person name="Kai C."/>
            <person name="Sasaki D."/>
            <person name="Tomaru Y."/>
            <person name="Fukuda S."/>
            <person name="Kanamori-Katayama M."/>
            <person name="Suzuki M."/>
            <person name="Aoki J."/>
            <person name="Arakawa T."/>
            <person name="Iida J."/>
            <person name="Imamura K."/>
            <person name="Itoh M."/>
            <person name="Kato T."/>
            <person name="Kawaji H."/>
            <person name="Kawagashira N."/>
            <person name="Kawashima T."/>
            <person name="Kojima M."/>
            <person name="Kondo S."/>
            <person name="Konno H."/>
            <person name="Nakano K."/>
            <person name="Ninomiya N."/>
            <person name="Nishio T."/>
            <person name="Okada M."/>
            <person name="Plessy C."/>
            <person name="Shibata K."/>
            <person name="Shiraki T."/>
            <person name="Suzuki S."/>
            <person name="Tagami M."/>
            <person name="Waki K."/>
            <person name="Watahiki A."/>
            <person name="Okamura-Oho Y."/>
            <person name="Suzuki H."/>
            <person name="Kawai J."/>
            <person name="Hayashizaki Y."/>
        </authorList>
    </citation>
    <scope>NUCLEOTIDE SEQUENCE [LARGE SCALE MRNA]</scope>
    <source>
        <strain>C57BL/6J</strain>
        <tissue>Head</tissue>
    </source>
</reference>
<reference key="3">
    <citation type="journal article" date="2004" name="Genome Res.">
        <title>The status, quality, and expansion of the NIH full-length cDNA project: the Mammalian Gene Collection (MGC).</title>
        <authorList>
            <consortium name="The MGC Project Team"/>
        </authorList>
    </citation>
    <scope>NUCLEOTIDE SEQUENCE [LARGE SCALE MRNA]</scope>
    <source>
        <strain>129</strain>
        <strain>C57BL/6J</strain>
        <tissue>Embryo</tissue>
        <tissue>Mammary gland</tissue>
    </source>
</reference>
<reference key="4">
    <citation type="journal article" date="2009" name="Nucleic Acids Res.">
        <title>Molecular characterization of Mybbp1a as a co-repressor on the Period2 promoter.</title>
        <authorList>
            <person name="Hara Y."/>
            <person name="Onishi Y."/>
            <person name="Oishi K."/>
            <person name="Miyazaki K."/>
            <person name="Fukamizu A."/>
            <person name="Ishida N."/>
        </authorList>
    </citation>
    <scope>INTERACTION WITH CRY1</scope>
</reference>
<reference key="5">
    <citation type="journal article" date="2010" name="Cell">
        <title>A tissue-specific atlas of mouse protein phosphorylation and expression.</title>
        <authorList>
            <person name="Huttlin E.L."/>
            <person name="Jedrychowski M.P."/>
            <person name="Elias J.E."/>
            <person name="Goswami T."/>
            <person name="Rad R."/>
            <person name="Beausoleil S.A."/>
            <person name="Villen J."/>
            <person name="Haas W."/>
            <person name="Sowa M.E."/>
            <person name="Gygi S.P."/>
        </authorList>
    </citation>
    <scope>IDENTIFICATION BY MASS SPECTROMETRY [LARGE SCALE ANALYSIS]</scope>
    <source>
        <tissue>Liver</tissue>
        <tissue>Lung</tissue>
        <tissue>Spleen</tissue>
    </source>
</reference>
<reference evidence="5 6" key="6">
    <citation type="journal article" date="2022" name="Nature">
        <title>A male germ-cell-specific ribosome controls male fertility.</title>
        <authorList>
            <person name="Li H."/>
            <person name="Huo Y."/>
            <person name="He X."/>
            <person name="Yao L."/>
            <person name="Zhang H."/>
            <person name="Cui Y."/>
            <person name="Xiao H."/>
            <person name="Xie W."/>
            <person name="Zhang D."/>
            <person name="Wang Y."/>
            <person name="Zhang S."/>
            <person name="Tu H."/>
            <person name="Cheng Y."/>
            <person name="Guo Y."/>
            <person name="Cao X."/>
            <person name="Zhu Y."/>
            <person name="Jiang T."/>
            <person name="Guo X."/>
            <person name="Qin Y."/>
            <person name="Sha J."/>
        </authorList>
    </citation>
    <scope>STRUCTURE BY ELECTRON MICROSCOPY (3.03 ANGSTROMS) OF RIBOSOME</scope>
    <scope>FUNCTION</scope>
    <scope>SUBUNIT</scope>
    <scope>SUBCELLULAR LOCATION</scope>
</reference>
<protein>
    <recommendedName>
        <fullName evidence="4">Large ribosomal subunit protein eL8</fullName>
    </recommendedName>
    <alternativeName>
        <fullName>60S ribosomal protein L7a</fullName>
    </alternativeName>
    <alternativeName>
        <fullName>Surfeit locus protein 3</fullName>
    </alternativeName>
</protein>
<gene>
    <name type="primary">Rpl7a</name>
    <name type="synonym">Surf-3</name>
    <name type="synonym">Surf3</name>
</gene>
<organism>
    <name type="scientific">Mus musculus</name>
    <name type="common">Mouse</name>
    <dbReference type="NCBI Taxonomy" id="10090"/>
    <lineage>
        <taxon>Eukaryota</taxon>
        <taxon>Metazoa</taxon>
        <taxon>Chordata</taxon>
        <taxon>Craniata</taxon>
        <taxon>Vertebrata</taxon>
        <taxon>Euteleostomi</taxon>
        <taxon>Mammalia</taxon>
        <taxon>Eutheria</taxon>
        <taxon>Euarchontoglires</taxon>
        <taxon>Glires</taxon>
        <taxon>Rodentia</taxon>
        <taxon>Myomorpha</taxon>
        <taxon>Muroidea</taxon>
        <taxon>Muridae</taxon>
        <taxon>Murinae</taxon>
        <taxon>Mus</taxon>
        <taxon>Mus</taxon>
    </lineage>
</organism>
<comment type="function">
    <text evidence="3">Component of the large ribosomal subunit (PubMed:36517592). The ribosome is a large ribonucleoprotein complex responsible for the synthesis of proteins in the cell (PubMed:36517592).</text>
</comment>
<comment type="subunit">
    <text evidence="1 2 3">Component of the large ribosomal subunit (PubMed:36517592). Interacts with CRY1 (PubMed:19129230). Interacts with DICER1, AGO2, TARBP2, MOV10 and EIF6; they form a large RNA-induced silencing complex (RISC) (By similarity).</text>
</comment>
<comment type="subcellular location">
    <subcellularLocation>
        <location evidence="3">Cytoplasm</location>
    </subcellularLocation>
</comment>
<comment type="similarity">
    <text evidence="4">Belongs to the eukaryotic ribosomal protein eL8 family.</text>
</comment>
<comment type="sequence caution" evidence="4">
    <conflict type="erroneous initiation">
        <sequence resource="EMBL-CDS" id="AAH16489"/>
    </conflict>
    <text>Truncated N-terminus.</text>
</comment>
<evidence type="ECO:0000250" key="1">
    <source>
        <dbReference type="UniProtKB" id="P62424"/>
    </source>
</evidence>
<evidence type="ECO:0000269" key="2">
    <source>
    </source>
</evidence>
<evidence type="ECO:0000269" key="3">
    <source>
    </source>
</evidence>
<evidence type="ECO:0000305" key="4"/>
<evidence type="ECO:0007744" key="5">
    <source>
        <dbReference type="PDB" id="7CPU"/>
    </source>
</evidence>
<evidence type="ECO:0007744" key="6">
    <source>
        <dbReference type="PDB" id="7CPV"/>
    </source>
</evidence>
<name>RL7A_MOUSE</name>
<dbReference type="EMBL" id="M14689">
    <property type="protein sequence ID" value="AAA40152.1"/>
    <property type="molecule type" value="Genomic_DNA"/>
</dbReference>
<dbReference type="EMBL" id="M21455">
    <property type="protein sequence ID" value="AAA40152.1"/>
    <property type="status" value="JOINED"/>
    <property type="molecule type" value="Genomic_DNA"/>
</dbReference>
<dbReference type="EMBL" id="M21456">
    <property type="protein sequence ID" value="AAA40152.1"/>
    <property type="status" value="JOINED"/>
    <property type="molecule type" value="Genomic_DNA"/>
</dbReference>
<dbReference type="EMBL" id="M21457">
    <property type="protein sequence ID" value="AAA40152.1"/>
    <property type="status" value="JOINED"/>
    <property type="molecule type" value="Genomic_DNA"/>
</dbReference>
<dbReference type="EMBL" id="M21458">
    <property type="protein sequence ID" value="AAA40152.1"/>
    <property type="status" value="JOINED"/>
    <property type="molecule type" value="Genomic_DNA"/>
</dbReference>
<dbReference type="EMBL" id="M21459">
    <property type="protein sequence ID" value="AAA40152.1"/>
    <property type="status" value="JOINED"/>
    <property type="molecule type" value="Genomic_DNA"/>
</dbReference>
<dbReference type="EMBL" id="M21460">
    <property type="protein sequence ID" value="AAA40152.1"/>
    <property type="status" value="JOINED"/>
    <property type="molecule type" value="Genomic_DNA"/>
</dbReference>
<dbReference type="EMBL" id="M14692">
    <property type="protein sequence ID" value="AAA40152.1"/>
    <property type="status" value="JOINED"/>
    <property type="molecule type" value="Genomic_DNA"/>
</dbReference>
<dbReference type="EMBL" id="AK019449">
    <property type="protein sequence ID" value="BAB31725.1"/>
    <property type="molecule type" value="mRNA"/>
</dbReference>
<dbReference type="EMBL" id="BC016489">
    <property type="protein sequence ID" value="AAH16489.1"/>
    <property type="status" value="ALT_INIT"/>
    <property type="molecule type" value="mRNA"/>
</dbReference>
<dbReference type="EMBL" id="BC080663">
    <property type="protein sequence ID" value="AAH80663.1"/>
    <property type="molecule type" value="mRNA"/>
</dbReference>
<dbReference type="EMBL" id="BC080669">
    <property type="protein sequence ID" value="AAH80669.1"/>
    <property type="molecule type" value="mRNA"/>
</dbReference>
<dbReference type="EMBL" id="BC080712">
    <property type="protein sequence ID" value="AAH80712.1"/>
    <property type="molecule type" value="mRNA"/>
</dbReference>
<dbReference type="EMBL" id="BC084678">
    <property type="protein sequence ID" value="AAH84678.1"/>
    <property type="molecule type" value="mRNA"/>
</dbReference>
<dbReference type="CCDS" id="CCDS15815.1"/>
<dbReference type="PIR" id="A30241">
    <property type="entry name" value="A30241"/>
</dbReference>
<dbReference type="RefSeq" id="NP_038749.1">
    <property type="nucleotide sequence ID" value="NM_013721.4"/>
</dbReference>
<dbReference type="PDB" id="6SWA">
    <property type="method" value="EM"/>
    <property type="resolution" value="3.10 A"/>
    <property type="chains" value="G=1-266"/>
</dbReference>
<dbReference type="PDB" id="7CPU">
    <property type="method" value="EM"/>
    <property type="resolution" value="2.82 A"/>
    <property type="chains" value="LG=1-266"/>
</dbReference>
<dbReference type="PDB" id="7CPV">
    <property type="method" value="EM"/>
    <property type="resolution" value="3.03 A"/>
    <property type="chains" value="LG=1-266"/>
</dbReference>
<dbReference type="PDB" id="7LS1">
    <property type="method" value="EM"/>
    <property type="resolution" value="3.30 A"/>
    <property type="chains" value="B1=1-266"/>
</dbReference>
<dbReference type="PDB" id="7LS2">
    <property type="method" value="EM"/>
    <property type="resolution" value="3.10 A"/>
    <property type="chains" value="B1=1-266"/>
</dbReference>
<dbReference type="PDBsum" id="6SWA"/>
<dbReference type="PDBsum" id="7CPU"/>
<dbReference type="PDBsum" id="7CPV"/>
<dbReference type="PDBsum" id="7LS1"/>
<dbReference type="PDBsum" id="7LS2"/>
<dbReference type="EMDB" id="EMD-10321"/>
<dbReference type="EMDB" id="EMD-23500"/>
<dbReference type="EMDB" id="EMD-23501"/>
<dbReference type="EMDB" id="EMD-30432"/>
<dbReference type="EMDB" id="EMD-30433"/>
<dbReference type="SMR" id="P12970"/>
<dbReference type="BioGRID" id="205125">
    <property type="interactions" value="116"/>
</dbReference>
<dbReference type="ComplexPortal" id="CPX-5262">
    <property type="entry name" value="60S cytosolic large ribosomal subunit"/>
</dbReference>
<dbReference type="ComplexPortal" id="CPX-7662">
    <property type="entry name" value="60S cytosolic large ribosomal subunit, testis-specific variant"/>
</dbReference>
<dbReference type="ComplexPortal" id="CPX-7663">
    <property type="entry name" value="60S cytosolic large ribosomal subunit, striated muscle variant"/>
</dbReference>
<dbReference type="CORUM" id="P12970"/>
<dbReference type="FunCoup" id="P12970">
    <property type="interactions" value="1966"/>
</dbReference>
<dbReference type="IntAct" id="P12970">
    <property type="interactions" value="5"/>
</dbReference>
<dbReference type="MINT" id="P12970"/>
<dbReference type="STRING" id="10090.ENSMUSP00000099962"/>
<dbReference type="GlyGen" id="P12970">
    <property type="glycosylation" value="2 sites, 1 O-linked glycan (2 sites)"/>
</dbReference>
<dbReference type="iPTMnet" id="P12970"/>
<dbReference type="PhosphoSitePlus" id="P12970"/>
<dbReference type="SwissPalm" id="P12970"/>
<dbReference type="jPOST" id="P12970"/>
<dbReference type="PaxDb" id="10090-ENSMUSP00000099962"/>
<dbReference type="PeptideAtlas" id="P12970"/>
<dbReference type="ProteomicsDB" id="299826"/>
<dbReference type="Pumba" id="P12970"/>
<dbReference type="Antibodypedia" id="31830">
    <property type="antibodies" value="148 antibodies from 28 providers"/>
</dbReference>
<dbReference type="DNASU" id="27176"/>
<dbReference type="Ensembl" id="ENSMUST00000102898.5">
    <property type="protein sequence ID" value="ENSMUSP00000099962.5"/>
    <property type="gene ID" value="ENSMUSG00000062647.17"/>
</dbReference>
<dbReference type="GeneID" id="27176"/>
<dbReference type="KEGG" id="mmu:27176"/>
<dbReference type="UCSC" id="uc008iwf.1">
    <property type="organism name" value="mouse"/>
</dbReference>
<dbReference type="AGR" id="MGI:1353472"/>
<dbReference type="CTD" id="6130"/>
<dbReference type="MGI" id="MGI:1353472">
    <property type="gene designation" value="Rpl7a"/>
</dbReference>
<dbReference type="VEuPathDB" id="HostDB:ENSMUSG00000062647"/>
<dbReference type="eggNOG" id="KOG3166">
    <property type="taxonomic scope" value="Eukaryota"/>
</dbReference>
<dbReference type="GeneTree" id="ENSGT00940000153294"/>
<dbReference type="HOGENOM" id="CLU_055193_0_1_1"/>
<dbReference type="InParanoid" id="P12970"/>
<dbReference type="OMA" id="RMVKWPA"/>
<dbReference type="OrthoDB" id="29563at2759"/>
<dbReference type="PhylomeDB" id="P12970"/>
<dbReference type="TreeFam" id="TF300788"/>
<dbReference type="Reactome" id="R-MMU-156827">
    <property type="pathway name" value="L13a-mediated translational silencing of Ceruloplasmin expression"/>
</dbReference>
<dbReference type="Reactome" id="R-MMU-1799339">
    <property type="pathway name" value="SRP-dependent cotranslational protein targeting to membrane"/>
</dbReference>
<dbReference type="Reactome" id="R-MMU-6791226">
    <property type="pathway name" value="Major pathway of rRNA processing in the nucleolus and cytosol"/>
</dbReference>
<dbReference type="Reactome" id="R-MMU-72689">
    <property type="pathway name" value="Formation of a pool of free 40S subunits"/>
</dbReference>
<dbReference type="Reactome" id="R-MMU-72706">
    <property type="pathway name" value="GTP hydrolysis and joining of the 60S ribosomal subunit"/>
</dbReference>
<dbReference type="Reactome" id="R-MMU-975956">
    <property type="pathway name" value="Nonsense Mediated Decay (NMD) independent of the Exon Junction Complex (EJC)"/>
</dbReference>
<dbReference type="Reactome" id="R-MMU-975957">
    <property type="pathway name" value="Nonsense Mediated Decay (NMD) enhanced by the Exon Junction Complex (EJC)"/>
</dbReference>
<dbReference type="BioGRID-ORCS" id="27176">
    <property type="hits" value="25 hits in 80 CRISPR screens"/>
</dbReference>
<dbReference type="CD-CODE" id="CE726F99">
    <property type="entry name" value="Postsynaptic density"/>
</dbReference>
<dbReference type="ChiTaRS" id="Rpl7a">
    <property type="organism name" value="mouse"/>
</dbReference>
<dbReference type="PRO" id="PR:P12970"/>
<dbReference type="Proteomes" id="UP000000589">
    <property type="component" value="Chromosome 2"/>
</dbReference>
<dbReference type="RNAct" id="P12970">
    <property type="molecule type" value="protein"/>
</dbReference>
<dbReference type="Bgee" id="ENSMUSG00000062647">
    <property type="expression patterns" value="Expressed in epiblast (generic) and 64 other cell types or tissues"/>
</dbReference>
<dbReference type="ExpressionAtlas" id="P12970">
    <property type="expression patterns" value="baseline and differential"/>
</dbReference>
<dbReference type="GO" id="GO:0005737">
    <property type="term" value="C:cytoplasm"/>
    <property type="evidence" value="ECO:0000314"/>
    <property type="project" value="ComplexPortal"/>
</dbReference>
<dbReference type="GO" id="GO:0005829">
    <property type="term" value="C:cytosol"/>
    <property type="evidence" value="ECO:0000304"/>
    <property type="project" value="Reactome"/>
</dbReference>
<dbReference type="GO" id="GO:0022625">
    <property type="term" value="C:cytosolic large ribosomal subunit"/>
    <property type="evidence" value="ECO:0000314"/>
    <property type="project" value="UniProtKB"/>
</dbReference>
<dbReference type="GO" id="GO:0016020">
    <property type="term" value="C:membrane"/>
    <property type="evidence" value="ECO:0000314"/>
    <property type="project" value="BHF-UCL"/>
</dbReference>
<dbReference type="GO" id="GO:0005730">
    <property type="term" value="C:nucleolus"/>
    <property type="evidence" value="ECO:0007669"/>
    <property type="project" value="Ensembl"/>
</dbReference>
<dbReference type="GO" id="GO:0098794">
    <property type="term" value="C:postsynapse"/>
    <property type="evidence" value="ECO:0000303"/>
    <property type="project" value="SynGO"/>
</dbReference>
<dbReference type="GO" id="GO:0098793">
    <property type="term" value="C:presynapse"/>
    <property type="evidence" value="ECO:0000303"/>
    <property type="project" value="SynGO"/>
</dbReference>
<dbReference type="GO" id="GO:0005840">
    <property type="term" value="C:ribosome"/>
    <property type="evidence" value="ECO:0000314"/>
    <property type="project" value="HGNC-UCL"/>
</dbReference>
<dbReference type="GO" id="GO:0045202">
    <property type="term" value="C:synapse"/>
    <property type="evidence" value="ECO:0000314"/>
    <property type="project" value="SynGO"/>
</dbReference>
<dbReference type="GO" id="GO:0003723">
    <property type="term" value="F:RNA binding"/>
    <property type="evidence" value="ECO:0007669"/>
    <property type="project" value="InterPro"/>
</dbReference>
<dbReference type="GO" id="GO:0003735">
    <property type="term" value="F:structural constituent of ribosome"/>
    <property type="evidence" value="ECO:0000314"/>
    <property type="project" value="UniProtKB"/>
</dbReference>
<dbReference type="GO" id="GO:0002181">
    <property type="term" value="P:cytoplasmic translation"/>
    <property type="evidence" value="ECO:0000303"/>
    <property type="project" value="ComplexPortal"/>
</dbReference>
<dbReference type="GO" id="GO:0042254">
    <property type="term" value="P:ribosome biogenesis"/>
    <property type="evidence" value="ECO:0007669"/>
    <property type="project" value="InterPro"/>
</dbReference>
<dbReference type="GO" id="GO:0140242">
    <property type="term" value="P:translation at postsynapse"/>
    <property type="evidence" value="ECO:0000303"/>
    <property type="project" value="SynGO"/>
</dbReference>
<dbReference type="GO" id="GO:0140236">
    <property type="term" value="P:translation at presynapse"/>
    <property type="evidence" value="ECO:0000303"/>
    <property type="project" value="SynGO"/>
</dbReference>
<dbReference type="FunFam" id="3.30.1330.30:FF:000003">
    <property type="entry name" value="60S ribosomal protein L7a"/>
    <property type="match status" value="1"/>
</dbReference>
<dbReference type="Gene3D" id="3.30.1330.30">
    <property type="match status" value="1"/>
</dbReference>
<dbReference type="InterPro" id="IPR050257">
    <property type="entry name" value="eL8/uL1-like"/>
</dbReference>
<dbReference type="InterPro" id="IPR029064">
    <property type="entry name" value="Ribosomal_eL30-like_sf"/>
</dbReference>
<dbReference type="InterPro" id="IPR004037">
    <property type="entry name" value="Ribosomal_eL8-like_CS"/>
</dbReference>
<dbReference type="InterPro" id="IPR004038">
    <property type="entry name" value="Ribosomal_eL8/eL30/eS12/Gad45"/>
</dbReference>
<dbReference type="InterPro" id="IPR018492">
    <property type="entry name" value="Ribosomal_eL8/Nhp2"/>
</dbReference>
<dbReference type="InterPro" id="IPR001921">
    <property type="entry name" value="Ribosomal_eL8_euk"/>
</dbReference>
<dbReference type="PANTHER" id="PTHR23105">
    <property type="entry name" value="RIBOSOMAL PROTEIN L7AE FAMILY MEMBER"/>
    <property type="match status" value="1"/>
</dbReference>
<dbReference type="Pfam" id="PF01248">
    <property type="entry name" value="Ribosomal_L7Ae"/>
    <property type="match status" value="1"/>
</dbReference>
<dbReference type="PRINTS" id="PR00881">
    <property type="entry name" value="L7ARS6FAMILY"/>
</dbReference>
<dbReference type="PRINTS" id="PR00882">
    <property type="entry name" value="RIBOSOMALL7A"/>
</dbReference>
<dbReference type="SUPFAM" id="SSF55315">
    <property type="entry name" value="L30e-like"/>
    <property type="match status" value="1"/>
</dbReference>
<dbReference type="PROSITE" id="PS01082">
    <property type="entry name" value="RIBOSOMAL_L7AE"/>
    <property type="match status" value="1"/>
</dbReference>
<sequence length="266" mass="29977">MPKGKKAKGKKVAPAPAVVKKQEAKKVVNPLFEKRPKNFGIGQDIQPKRDLTRFVKWPRYIRLQRQRAILYKRLKVPPAINQFTQALDRQTATQLLKLAHKYRPETKQEKKQRLLARAEKKAAGKGDVPTKRPPVLRAGVNTVTTLVENKKAQLVVIAHDVDPIELVVFLPALCRKMGVPYCIIKGKARLGHLVHRKTCTTVAFTQVNSEDKGALAKLVEAIRTNYNDRYDEIRRHWGGNVLGPKSVARIAKLEKAKAKELATKLG</sequence>
<keyword id="KW-0002">3D-structure</keyword>
<keyword id="KW-0007">Acetylation</keyword>
<keyword id="KW-0963">Cytoplasm</keyword>
<keyword id="KW-1017">Isopeptide bond</keyword>
<keyword id="KW-1185">Reference proteome</keyword>
<keyword id="KW-0687">Ribonucleoprotein</keyword>
<keyword id="KW-0689">Ribosomal protein</keyword>
<keyword id="KW-0832">Ubl conjugation</keyword>
<proteinExistence type="evidence at protein level"/>